<gene>
    <name type="primary">LC2</name>
</gene>
<feature type="signal peptide" evidence="3 4">
    <location>
        <begin position="1"/>
        <end position="24"/>
    </location>
</feature>
<feature type="chain" id="PRO_0000017535" description="Snaclec coagulation factor X-activating enzyme light chain 2">
    <location>
        <begin position="25"/>
        <end position="158"/>
    </location>
</feature>
<feature type="domain" description="C-type lectin" evidence="1">
    <location>
        <begin position="34"/>
        <end position="153"/>
    </location>
</feature>
<feature type="glycosylation site" description="N-linked (GlcNAc...) (complex) asparagine" evidence="2">
    <location>
        <position position="82"/>
    </location>
</feature>
<feature type="disulfide bond" evidence="1 2">
    <location>
        <begin position="27"/>
        <end position="38"/>
    </location>
</feature>
<feature type="disulfide bond" evidence="1 2">
    <location>
        <begin position="55"/>
        <end position="152"/>
    </location>
</feature>
<feature type="disulfide bond" description="Interchain (with C-100 in coagulation factor X-activating enzyme light chain LC1)" evidence="1 2">
    <location>
        <position position="104"/>
    </location>
</feature>
<feature type="disulfide bond" evidence="1 2">
    <location>
        <begin position="127"/>
        <end position="144"/>
    </location>
</feature>
<feature type="disulfide bond" description="Interchain (with C-391 in coagulation factor X-activating enzyme heavy chain)" evidence="1 2">
    <location>
        <position position="158"/>
    </location>
</feature>
<feature type="sequence conflict" description="In Ref. 3; AA sequence." evidence="5" ref="3">
    <original>D</original>
    <variation>L</variation>
    <location>
        <position position="26"/>
    </location>
</feature>
<feature type="sequence conflict" description="In Ref. 3; AA sequence." evidence="5" ref="3">
    <original>D</original>
    <variation>P</variation>
    <location>
        <position position="30"/>
    </location>
</feature>
<feature type="sequence conflict" description="In Ref. 3; AA sequence." evidence="5" ref="3">
    <original>L</original>
    <variation>P</variation>
    <location>
        <position position="33"/>
    </location>
</feature>
<feature type="sequence conflict" description="In Ref. 3; AA sequence." evidence="5" ref="3">
    <original>C</original>
    <variation>F</variation>
    <location>
        <position position="38"/>
    </location>
</feature>
<feature type="sequence conflict" description="In Ref. 3; AA sequence." evidence="5" ref="3">
    <original>R</original>
    <variation>W</variation>
    <location>
        <position position="40"/>
    </location>
</feature>
<feature type="sequence conflict" description="In Ref. 3; AA sequence." evidence="5" ref="3">
    <original>E</original>
    <variation>L</variation>
    <location>
        <position position="44"/>
    </location>
</feature>
<feature type="sequence conflict" description="In Ref. 2; AAW69869." evidence="5" ref="2">
    <original>Q</original>
    <variation>E</variation>
    <location>
        <position position="122"/>
    </location>
</feature>
<feature type="sequence conflict" description="In Ref. 2; AAW69869." evidence="5" ref="2">
    <original>L</original>
    <variation>V</variation>
    <location>
        <position position="149"/>
    </location>
</feature>
<feature type="turn" evidence="7">
    <location>
        <begin position="28"/>
        <end position="30"/>
    </location>
</feature>
<feature type="strand" evidence="7">
    <location>
        <begin position="31"/>
        <end position="34"/>
    </location>
</feature>
<feature type="strand" evidence="7">
    <location>
        <begin position="37"/>
        <end position="47"/>
    </location>
</feature>
<feature type="helix" evidence="7">
    <location>
        <begin position="48"/>
        <end position="55"/>
    </location>
</feature>
<feature type="turn" evidence="7">
    <location>
        <begin position="58"/>
        <end position="61"/>
    </location>
</feature>
<feature type="helix" evidence="7">
    <location>
        <begin position="70"/>
        <end position="81"/>
    </location>
</feature>
<feature type="strand" evidence="7">
    <location>
        <begin position="90"/>
        <end position="92"/>
    </location>
</feature>
<feature type="strand" evidence="7">
    <location>
        <begin position="95"/>
        <end position="97"/>
    </location>
</feature>
<feature type="turn" evidence="7">
    <location>
        <begin position="102"/>
        <end position="105"/>
    </location>
</feature>
<feature type="helix" evidence="7">
    <location>
        <begin position="121"/>
        <end position="123"/>
    </location>
</feature>
<feature type="strand" evidence="7">
    <location>
        <begin position="127"/>
        <end position="131"/>
    </location>
</feature>
<feature type="helix" evidence="7">
    <location>
        <begin position="132"/>
        <end position="134"/>
    </location>
</feature>
<feature type="strand" evidence="7">
    <location>
        <begin position="139"/>
        <end position="142"/>
    </location>
</feature>
<feature type="strand" evidence="7">
    <location>
        <begin position="146"/>
        <end position="154"/>
    </location>
</feature>
<comment type="function">
    <text evidence="3">Regulatory subunit of the blood coagulation factor X- and IX-activating enzyme. The enzyme activates coagulation factor X (F10) by cleaving the Arg-Ile bond and is also able to activate coagulation factor IX (F9) and protein S (PROS1) by specific cleavage of Arg-Ile and Arg-Val bonds. May serve as an exosite by which the enzyme recognizes and binds to the Gla domain of factor X (F10) and factor IX (F9) in a calcium-dependent manner.</text>
</comment>
<comment type="subunit">
    <text evidence="2 4">Heterotrimer; disulfide-linked. The heterotrimer consists of 1 heavy chain (a metalloproteinase) and 2 light chains: LC1 and LC2.</text>
</comment>
<comment type="subcellular location">
    <subcellularLocation>
        <location>Secreted</location>
    </subcellularLocation>
</comment>
<comment type="tissue specificity">
    <text>Expressed by the venom gland.</text>
</comment>
<comment type="PTM">
    <text evidence="2 4">N-glycosylated; probably required for conformation. Removal of easily accessible sugars does not change its functional capacity, but removal of the core sugars with N-glycanase causes a virtually complete loss of enzyme activity, apparently as a result of major conformational changes in the molecule. Not O-glycosylated.</text>
</comment>
<comment type="miscellaneous">
    <text evidence="6">Binding to prothrombin and protein C (PROC) is hardly detectable.</text>
</comment>
<comment type="similarity">
    <text evidence="5">Belongs to the snaclec family.</text>
</comment>
<accession>Q4PRD2</accession>
<accession>A9UKE2</accession>
<protein>
    <recommendedName>
        <fullName>Snaclec coagulation factor X-activating enzyme light chain 2</fullName>
    </recommendedName>
    <alternativeName>
        <fullName>C-type lectin-like protein subunit 1</fullName>
    </alternativeName>
    <alternativeName>
        <fullName>Coagulation factor X-activating enzyme beta-chain</fullName>
    </alternativeName>
    <alternativeName>
        <fullName>RVV-X light chain 2</fullName>
    </alternativeName>
</protein>
<keyword id="KW-0002">3D-structure</keyword>
<keyword id="KW-1204">Blood coagulation cascade activating toxin</keyword>
<keyword id="KW-0106">Calcium</keyword>
<keyword id="KW-0903">Direct protein sequencing</keyword>
<keyword id="KW-1015">Disulfide bond</keyword>
<keyword id="KW-0325">Glycoprotein</keyword>
<keyword id="KW-1199">Hemostasis impairing toxin</keyword>
<keyword id="KW-0479">Metal-binding</keyword>
<keyword id="KW-0964">Secreted</keyword>
<keyword id="KW-0732">Signal</keyword>
<keyword id="KW-0800">Toxin</keyword>
<dbReference type="EMBL" id="DQ060414">
    <property type="protein sequence ID" value="AAY63870.1"/>
    <property type="molecule type" value="mRNA"/>
</dbReference>
<dbReference type="EMBL" id="AY734997">
    <property type="protein sequence ID" value="AAW69869.1"/>
    <property type="molecule type" value="mRNA"/>
</dbReference>
<dbReference type="PDB" id="2E3X">
    <property type="method" value="X-ray"/>
    <property type="resolution" value="2.91 A"/>
    <property type="chains" value="B=25-158"/>
</dbReference>
<dbReference type="PDBsum" id="2E3X"/>
<dbReference type="SMR" id="Q4PRD2"/>
<dbReference type="GlyCosmos" id="Q4PRD2">
    <property type="glycosylation" value="1 site, No reported glycans"/>
</dbReference>
<dbReference type="iPTMnet" id="Q4PRD2"/>
<dbReference type="BRENDA" id="3.4.24.58">
    <property type="organism ID" value="6667"/>
</dbReference>
<dbReference type="EvolutionaryTrace" id="Q4PRD2"/>
<dbReference type="GO" id="GO:0005576">
    <property type="term" value="C:extracellular region"/>
    <property type="evidence" value="ECO:0007669"/>
    <property type="project" value="UniProtKB-SubCell"/>
</dbReference>
<dbReference type="GO" id="GO:0046872">
    <property type="term" value="F:metal ion binding"/>
    <property type="evidence" value="ECO:0007669"/>
    <property type="project" value="UniProtKB-KW"/>
</dbReference>
<dbReference type="GO" id="GO:0090729">
    <property type="term" value="F:toxin activity"/>
    <property type="evidence" value="ECO:0007669"/>
    <property type="project" value="UniProtKB-KW"/>
</dbReference>
<dbReference type="FunFam" id="3.10.100.10:FF:000087">
    <property type="entry name" value="Snaclec rhodocetin subunit delta"/>
    <property type="match status" value="1"/>
</dbReference>
<dbReference type="Gene3D" id="3.10.100.10">
    <property type="entry name" value="Mannose-Binding Protein A, subunit A"/>
    <property type="match status" value="1"/>
</dbReference>
<dbReference type="InterPro" id="IPR001304">
    <property type="entry name" value="C-type_lectin-like"/>
</dbReference>
<dbReference type="InterPro" id="IPR016186">
    <property type="entry name" value="C-type_lectin-like/link_sf"/>
</dbReference>
<dbReference type="InterPro" id="IPR050111">
    <property type="entry name" value="C-type_lectin/snaclec_domain"/>
</dbReference>
<dbReference type="InterPro" id="IPR018378">
    <property type="entry name" value="C-type_lectin_CS"/>
</dbReference>
<dbReference type="InterPro" id="IPR016187">
    <property type="entry name" value="CTDL_fold"/>
</dbReference>
<dbReference type="PANTHER" id="PTHR22803">
    <property type="entry name" value="MANNOSE, PHOSPHOLIPASE, LECTIN RECEPTOR RELATED"/>
    <property type="match status" value="1"/>
</dbReference>
<dbReference type="Pfam" id="PF00059">
    <property type="entry name" value="Lectin_C"/>
    <property type="match status" value="1"/>
</dbReference>
<dbReference type="PRINTS" id="PR01504">
    <property type="entry name" value="PNCREATITSAP"/>
</dbReference>
<dbReference type="SMART" id="SM00034">
    <property type="entry name" value="CLECT"/>
    <property type="match status" value="1"/>
</dbReference>
<dbReference type="SUPFAM" id="SSF56436">
    <property type="entry name" value="C-type lectin-like"/>
    <property type="match status" value="1"/>
</dbReference>
<dbReference type="PROSITE" id="PS00615">
    <property type="entry name" value="C_TYPE_LECTIN_1"/>
    <property type="match status" value="1"/>
</dbReference>
<dbReference type="PROSITE" id="PS50041">
    <property type="entry name" value="C_TYPE_LECTIN_2"/>
    <property type="match status" value="1"/>
</dbReference>
<reference key="1">
    <citation type="submission" date="2005-05" db="EMBL/GenBank/DDBJ databases">
        <title>Molecular cloning and sequence analysis of cDNAs encoding seven C-type lectin-like protein subunits from Daboia russellii siamensis.</title>
        <authorList>
            <person name="Zhong S."/>
            <person name="Jin Y."/>
            <person name="Li D."/>
            <person name="Wang W."/>
            <person name="Xiong Y."/>
        </authorList>
    </citation>
    <scope>NUCLEOTIDE SEQUENCE [MRNA]</scope>
    <source>
        <tissue>Venom gland</tissue>
    </source>
</reference>
<reference key="2">
    <citation type="journal article" date="2008" name="FEBS J.">
        <title>New insights into the functions and N-glycan structures of factor X activator from Russell's viper venom.</title>
        <authorList>
            <person name="Chen H.S."/>
            <person name="Chen J.M."/>
            <person name="Lin C.W."/>
            <person name="Khoo K.H."/>
            <person name="Tsai I.H."/>
        </authorList>
    </citation>
    <scope>NUCLEOTIDE SEQUENCE [MRNA]</scope>
    <scope>PROTEIN SEQUENCE OF 25-47</scope>
    <scope>FUNCTION</scope>
    <source>
        <tissue>Venom</tissue>
        <tissue>Venom gland</tissue>
    </source>
</reference>
<reference key="3">
    <citation type="journal article" date="1994" name="J. Biol. Chem.">
        <title>Factor X-activating glycoprotein of Russell's viper venom. Polypeptide composition and characterization of the carbohydrate moieties.</title>
        <authorList>
            <person name="Gowda D.C."/>
            <person name="Jackson C.M."/>
            <person name="Hensley P."/>
            <person name="Davidson E.A."/>
        </authorList>
    </citation>
    <scope>PROTEIN SEQUENCE OF 25-44</scope>
    <scope>ENZYME ACTIVITY</scope>
    <scope>SUBUNIT</scope>
    <scope>GLYCOSYLATION</scope>
    <source>
        <tissue>Venom</tissue>
    </source>
</reference>
<reference key="4">
    <citation type="journal article" date="2001" name="Haemostasis">
        <title>Snake venom activators of factor X: an overview.</title>
        <authorList>
            <person name="Tans G."/>
            <person name="Rosing J."/>
        </authorList>
    </citation>
    <scope>REVIEW</scope>
</reference>
<reference key="5">
    <citation type="journal article" date="2007" name="FEBS Lett.">
        <title>Crystal structure of RVV-X: an example of evolutionary gain of specificity by ADAM proteinases.</title>
        <authorList>
            <person name="Takeda S."/>
            <person name="Igarashi T."/>
            <person name="Mori H."/>
        </authorList>
    </citation>
    <scope>X-RAY CRYSTALLOGRAPHY (2.91 ANGSTROMS) OF 25-158 IN COMPLEX WITH LC1</scope>
    <scope>SUBUNIT</scope>
    <scope>GLYCOSYLATION AT ASN-82</scope>
    <scope>DISULFIDE BONDS</scope>
</reference>
<evidence type="ECO:0000255" key="1">
    <source>
        <dbReference type="PROSITE-ProRule" id="PRU00040"/>
    </source>
</evidence>
<evidence type="ECO:0000269" key="2">
    <source>
    </source>
</evidence>
<evidence type="ECO:0000269" key="3">
    <source>
    </source>
</evidence>
<evidence type="ECO:0000269" key="4">
    <source>
    </source>
</evidence>
<evidence type="ECO:0000305" key="5"/>
<evidence type="ECO:0000305" key="6">
    <source>
    </source>
</evidence>
<evidence type="ECO:0007829" key="7">
    <source>
        <dbReference type="PDB" id="2E3X"/>
    </source>
</evidence>
<organism>
    <name type="scientific">Daboia siamensis</name>
    <name type="common">Eastern Russel's viper</name>
    <name type="synonym">Daboia russelii siamensis</name>
    <dbReference type="NCBI Taxonomy" id="343250"/>
    <lineage>
        <taxon>Eukaryota</taxon>
        <taxon>Metazoa</taxon>
        <taxon>Chordata</taxon>
        <taxon>Craniata</taxon>
        <taxon>Vertebrata</taxon>
        <taxon>Euteleostomi</taxon>
        <taxon>Lepidosauria</taxon>
        <taxon>Squamata</taxon>
        <taxon>Bifurcata</taxon>
        <taxon>Unidentata</taxon>
        <taxon>Episquamata</taxon>
        <taxon>Toxicofera</taxon>
        <taxon>Serpentes</taxon>
        <taxon>Colubroidea</taxon>
        <taxon>Viperidae</taxon>
        <taxon>Viperinae</taxon>
        <taxon>Daboia</taxon>
    </lineage>
</organism>
<proteinExistence type="evidence at protein level"/>
<sequence>MGRFISVSFGLLVVFLSLSGTGAGLDCPPDSSLYRYFCYRVFKEHKTWEAAERFCMEHPNNGHLVSIESMEEAEFVAKLLSNTTGKFITHFWIGLMIKDKEQECSSEWSDGSSVSYDKLGKQEFRKCFVLEKESGYRMWFNRNCEERYLFVCKVPPEC</sequence>
<name>SLLC2_DABSI</name>